<evidence type="ECO:0000255" key="1">
    <source>
        <dbReference type="HAMAP-Rule" id="MF_01588"/>
    </source>
</evidence>
<keyword id="KW-0227">DNA damage</keyword>
<keyword id="KW-0234">DNA repair</keyword>
<keyword id="KW-0235">DNA replication</keyword>
<keyword id="KW-0436">Ligase</keyword>
<keyword id="KW-0460">Magnesium</keyword>
<keyword id="KW-0464">Manganese</keyword>
<keyword id="KW-0479">Metal-binding</keyword>
<keyword id="KW-0520">NAD</keyword>
<keyword id="KW-0862">Zinc</keyword>
<organism>
    <name type="scientific">Paracidovorax citrulli (strain AAC00-1)</name>
    <name type="common">Acidovorax citrulli</name>
    <dbReference type="NCBI Taxonomy" id="397945"/>
    <lineage>
        <taxon>Bacteria</taxon>
        <taxon>Pseudomonadati</taxon>
        <taxon>Pseudomonadota</taxon>
        <taxon>Betaproteobacteria</taxon>
        <taxon>Burkholderiales</taxon>
        <taxon>Comamonadaceae</taxon>
        <taxon>Paracidovorax</taxon>
    </lineage>
</organism>
<reference key="1">
    <citation type="submission" date="2006-12" db="EMBL/GenBank/DDBJ databases">
        <title>Complete sequence of Acidovorax avenae subsp. citrulli AAC00-1.</title>
        <authorList>
            <person name="Copeland A."/>
            <person name="Lucas S."/>
            <person name="Lapidus A."/>
            <person name="Barry K."/>
            <person name="Detter J.C."/>
            <person name="Glavina del Rio T."/>
            <person name="Dalin E."/>
            <person name="Tice H."/>
            <person name="Pitluck S."/>
            <person name="Kiss H."/>
            <person name="Brettin T."/>
            <person name="Bruce D."/>
            <person name="Han C."/>
            <person name="Tapia R."/>
            <person name="Gilna P."/>
            <person name="Schmutz J."/>
            <person name="Larimer F."/>
            <person name="Land M."/>
            <person name="Hauser L."/>
            <person name="Kyrpides N."/>
            <person name="Kim E."/>
            <person name="Stahl D."/>
            <person name="Richardson P."/>
        </authorList>
    </citation>
    <scope>NUCLEOTIDE SEQUENCE [LARGE SCALE GENOMIC DNA]</scope>
    <source>
        <strain>AAC00-1</strain>
    </source>
</reference>
<feature type="chain" id="PRO_0000313099" description="DNA ligase">
    <location>
        <begin position="1"/>
        <end position="732"/>
    </location>
</feature>
<feature type="domain" description="BRCT" evidence="1">
    <location>
        <begin position="653"/>
        <end position="732"/>
    </location>
</feature>
<feature type="active site" description="N6-AMP-lysine intermediate" evidence="1">
    <location>
        <position position="135"/>
    </location>
</feature>
<feature type="binding site" evidence="1">
    <location>
        <begin position="47"/>
        <end position="51"/>
    </location>
    <ligand>
        <name>NAD(+)</name>
        <dbReference type="ChEBI" id="CHEBI:57540"/>
    </ligand>
</feature>
<feature type="binding site" evidence="1">
    <location>
        <begin position="96"/>
        <end position="97"/>
    </location>
    <ligand>
        <name>NAD(+)</name>
        <dbReference type="ChEBI" id="CHEBI:57540"/>
    </ligand>
</feature>
<feature type="binding site" evidence="1">
    <location>
        <position position="133"/>
    </location>
    <ligand>
        <name>NAD(+)</name>
        <dbReference type="ChEBI" id="CHEBI:57540"/>
    </ligand>
</feature>
<feature type="binding site" evidence="1">
    <location>
        <position position="156"/>
    </location>
    <ligand>
        <name>NAD(+)</name>
        <dbReference type="ChEBI" id="CHEBI:57540"/>
    </ligand>
</feature>
<feature type="binding site" evidence="1">
    <location>
        <position position="196"/>
    </location>
    <ligand>
        <name>NAD(+)</name>
        <dbReference type="ChEBI" id="CHEBI:57540"/>
    </ligand>
</feature>
<feature type="binding site" evidence="1">
    <location>
        <position position="317"/>
    </location>
    <ligand>
        <name>NAD(+)</name>
        <dbReference type="ChEBI" id="CHEBI:57540"/>
    </ligand>
</feature>
<feature type="binding site" evidence="1">
    <location>
        <position position="341"/>
    </location>
    <ligand>
        <name>NAD(+)</name>
        <dbReference type="ChEBI" id="CHEBI:57540"/>
    </ligand>
</feature>
<feature type="binding site" evidence="1">
    <location>
        <position position="470"/>
    </location>
    <ligand>
        <name>Zn(2+)</name>
        <dbReference type="ChEBI" id="CHEBI:29105"/>
    </ligand>
</feature>
<feature type="binding site" evidence="1">
    <location>
        <position position="473"/>
    </location>
    <ligand>
        <name>Zn(2+)</name>
        <dbReference type="ChEBI" id="CHEBI:29105"/>
    </ligand>
</feature>
<feature type="binding site" evidence="1">
    <location>
        <position position="488"/>
    </location>
    <ligand>
        <name>Zn(2+)</name>
        <dbReference type="ChEBI" id="CHEBI:29105"/>
    </ligand>
</feature>
<feature type="binding site" evidence="1">
    <location>
        <position position="494"/>
    </location>
    <ligand>
        <name>Zn(2+)</name>
        <dbReference type="ChEBI" id="CHEBI:29105"/>
    </ligand>
</feature>
<comment type="function">
    <text evidence="1">DNA ligase that catalyzes the formation of phosphodiester linkages between 5'-phosphoryl and 3'-hydroxyl groups in double-stranded DNA using NAD as a coenzyme and as the energy source for the reaction. It is essential for DNA replication and repair of damaged DNA.</text>
</comment>
<comment type="catalytic activity">
    <reaction evidence="1">
        <text>NAD(+) + (deoxyribonucleotide)n-3'-hydroxyl + 5'-phospho-(deoxyribonucleotide)m = (deoxyribonucleotide)n+m + AMP + beta-nicotinamide D-nucleotide.</text>
        <dbReference type="EC" id="6.5.1.2"/>
    </reaction>
</comment>
<comment type="cofactor">
    <cofactor evidence="1">
        <name>Mg(2+)</name>
        <dbReference type="ChEBI" id="CHEBI:18420"/>
    </cofactor>
    <cofactor evidence="1">
        <name>Mn(2+)</name>
        <dbReference type="ChEBI" id="CHEBI:29035"/>
    </cofactor>
</comment>
<comment type="similarity">
    <text evidence="1">Belongs to the NAD-dependent DNA ligase family. LigA subfamily.</text>
</comment>
<protein>
    <recommendedName>
        <fullName evidence="1">DNA ligase</fullName>
        <ecNumber evidence="1">6.5.1.2</ecNumber>
    </recommendedName>
    <alternativeName>
        <fullName evidence="1">Polydeoxyribonucleotide synthase [NAD(+)]</fullName>
    </alternativeName>
</protein>
<sequence>MAEHPDLFSAPAQEAPEDLGLRAAALRAQLHQWAHQYYVLDAPTVPDAEYDRVFQALQALETAHPELVTPDSPTQRVIGAVMEGLTPVRHTVPMLSIRTETDTEASGAETFDARVRRELKLAPDAPPVEYVAEPKFDGLAMSLRYENGRLVQAATRGDGEVGEDVTHNIRTIRQIPLTLPTGGRYGVPPVLEVRGEVYMRRADFDRLNERQREAGGKTFVNPRNAAAGAVRQLDSGIAAQRPLSFFAYGLGDITPAAEGGPDFATHFDMLRQLKAWGFPVAAQVRTARGASELVAFHQEVGASRDQLPYDIDGVVYKVNSLALQRQLGFVTREPRWAVAHKYPAQEMVTRVEGIDVQVGRTGKLTPVARLAPVFVGGVTVTNATLHNLFEIRKKGVRVGDQVIVRRAGDVIPEVVGTVPAALLPVAGALQGSDALADAASGADGTAPGADAARAAPRSPYVPNFRMPRQCPICGSTVVREKGEANHRCTGGLFCPAQRKEALLHFAQRRAMDIEGLGEKLVDQLVEGQVIRTLPDLYRLGLTALSSLDRMAEKSAQNVLAALEKSKHTTLPRFLFGLGIRHVGEATAKDLARHFGGLDAIMDASVEQLLEVNDVGPVVAEAIHTFFAQPHNREVVEQLRACGVTWKEGPPAERATLPLAGKTFVLTGTLPTLSREDAKDRLEAAGAKVAGSVSRKTHYVVAGEEAGSKLAKAQELGVPVLDEAGMLALLQGR</sequence>
<dbReference type="EC" id="6.5.1.2" evidence="1"/>
<dbReference type="EMBL" id="CP000512">
    <property type="protein sequence ID" value="ABM33409.1"/>
    <property type="molecule type" value="Genomic_DNA"/>
</dbReference>
<dbReference type="RefSeq" id="WP_011795930.1">
    <property type="nucleotide sequence ID" value="NC_008752.1"/>
</dbReference>
<dbReference type="SMR" id="A1TR21"/>
<dbReference type="STRING" id="397945.Aave_2841"/>
<dbReference type="KEGG" id="aav:Aave_2841"/>
<dbReference type="eggNOG" id="COG0272">
    <property type="taxonomic scope" value="Bacteria"/>
</dbReference>
<dbReference type="HOGENOM" id="CLU_007764_2_1_4"/>
<dbReference type="OrthoDB" id="9759736at2"/>
<dbReference type="Proteomes" id="UP000002596">
    <property type="component" value="Chromosome"/>
</dbReference>
<dbReference type="GO" id="GO:0005829">
    <property type="term" value="C:cytosol"/>
    <property type="evidence" value="ECO:0007669"/>
    <property type="project" value="TreeGrafter"/>
</dbReference>
<dbReference type="GO" id="GO:0003677">
    <property type="term" value="F:DNA binding"/>
    <property type="evidence" value="ECO:0007669"/>
    <property type="project" value="InterPro"/>
</dbReference>
<dbReference type="GO" id="GO:0003911">
    <property type="term" value="F:DNA ligase (NAD+) activity"/>
    <property type="evidence" value="ECO:0007669"/>
    <property type="project" value="UniProtKB-UniRule"/>
</dbReference>
<dbReference type="GO" id="GO:0046872">
    <property type="term" value="F:metal ion binding"/>
    <property type="evidence" value="ECO:0007669"/>
    <property type="project" value="UniProtKB-KW"/>
</dbReference>
<dbReference type="GO" id="GO:0006281">
    <property type="term" value="P:DNA repair"/>
    <property type="evidence" value="ECO:0007669"/>
    <property type="project" value="UniProtKB-KW"/>
</dbReference>
<dbReference type="GO" id="GO:0006260">
    <property type="term" value="P:DNA replication"/>
    <property type="evidence" value="ECO:0007669"/>
    <property type="project" value="UniProtKB-KW"/>
</dbReference>
<dbReference type="CDD" id="cd17748">
    <property type="entry name" value="BRCT_DNA_ligase_like"/>
    <property type="match status" value="1"/>
</dbReference>
<dbReference type="CDD" id="cd00114">
    <property type="entry name" value="LIGANc"/>
    <property type="match status" value="1"/>
</dbReference>
<dbReference type="FunFam" id="1.10.150.20:FF:000006">
    <property type="entry name" value="DNA ligase"/>
    <property type="match status" value="1"/>
</dbReference>
<dbReference type="FunFam" id="1.10.150.20:FF:000007">
    <property type="entry name" value="DNA ligase"/>
    <property type="match status" value="1"/>
</dbReference>
<dbReference type="FunFam" id="1.10.287.610:FF:000002">
    <property type="entry name" value="DNA ligase"/>
    <property type="match status" value="1"/>
</dbReference>
<dbReference type="FunFam" id="2.40.50.140:FF:000012">
    <property type="entry name" value="DNA ligase"/>
    <property type="match status" value="1"/>
</dbReference>
<dbReference type="FunFam" id="3.30.470.30:FF:000001">
    <property type="entry name" value="DNA ligase"/>
    <property type="match status" value="1"/>
</dbReference>
<dbReference type="FunFam" id="3.40.50.10190:FF:000054">
    <property type="entry name" value="DNA ligase"/>
    <property type="match status" value="1"/>
</dbReference>
<dbReference type="Gene3D" id="6.20.10.30">
    <property type="match status" value="1"/>
</dbReference>
<dbReference type="Gene3D" id="1.10.150.20">
    <property type="entry name" value="5' to 3' exonuclease, C-terminal subdomain"/>
    <property type="match status" value="2"/>
</dbReference>
<dbReference type="Gene3D" id="3.40.50.10190">
    <property type="entry name" value="BRCT domain"/>
    <property type="match status" value="1"/>
</dbReference>
<dbReference type="Gene3D" id="3.30.470.30">
    <property type="entry name" value="DNA ligase/mRNA capping enzyme"/>
    <property type="match status" value="1"/>
</dbReference>
<dbReference type="Gene3D" id="1.10.287.610">
    <property type="entry name" value="Helix hairpin bin"/>
    <property type="match status" value="1"/>
</dbReference>
<dbReference type="Gene3D" id="2.40.50.140">
    <property type="entry name" value="Nucleic acid-binding proteins"/>
    <property type="match status" value="1"/>
</dbReference>
<dbReference type="HAMAP" id="MF_01588">
    <property type="entry name" value="DNA_ligase_A"/>
    <property type="match status" value="1"/>
</dbReference>
<dbReference type="InterPro" id="IPR001357">
    <property type="entry name" value="BRCT_dom"/>
</dbReference>
<dbReference type="InterPro" id="IPR036420">
    <property type="entry name" value="BRCT_dom_sf"/>
</dbReference>
<dbReference type="InterPro" id="IPR041663">
    <property type="entry name" value="DisA/LigA_HHH"/>
</dbReference>
<dbReference type="InterPro" id="IPR001679">
    <property type="entry name" value="DNA_ligase"/>
</dbReference>
<dbReference type="InterPro" id="IPR018239">
    <property type="entry name" value="DNA_ligase_AS"/>
</dbReference>
<dbReference type="InterPro" id="IPR033136">
    <property type="entry name" value="DNA_ligase_CS"/>
</dbReference>
<dbReference type="InterPro" id="IPR013839">
    <property type="entry name" value="DNAligase_adenylation"/>
</dbReference>
<dbReference type="InterPro" id="IPR013840">
    <property type="entry name" value="DNAligase_N"/>
</dbReference>
<dbReference type="InterPro" id="IPR003583">
    <property type="entry name" value="Hlx-hairpin-Hlx_DNA-bd_motif"/>
</dbReference>
<dbReference type="InterPro" id="IPR012340">
    <property type="entry name" value="NA-bd_OB-fold"/>
</dbReference>
<dbReference type="InterPro" id="IPR004150">
    <property type="entry name" value="NAD_DNA_ligase_OB"/>
</dbReference>
<dbReference type="InterPro" id="IPR010994">
    <property type="entry name" value="RuvA_2-like"/>
</dbReference>
<dbReference type="InterPro" id="IPR004149">
    <property type="entry name" value="Znf_DNAligase_C4"/>
</dbReference>
<dbReference type="NCBIfam" id="TIGR00575">
    <property type="entry name" value="dnlj"/>
    <property type="match status" value="1"/>
</dbReference>
<dbReference type="NCBIfam" id="NF005932">
    <property type="entry name" value="PRK07956.1"/>
    <property type="match status" value="1"/>
</dbReference>
<dbReference type="PANTHER" id="PTHR23389">
    <property type="entry name" value="CHROMOSOME TRANSMISSION FIDELITY FACTOR 18"/>
    <property type="match status" value="1"/>
</dbReference>
<dbReference type="PANTHER" id="PTHR23389:SF9">
    <property type="entry name" value="DNA LIGASE"/>
    <property type="match status" value="1"/>
</dbReference>
<dbReference type="Pfam" id="PF00533">
    <property type="entry name" value="BRCT"/>
    <property type="match status" value="1"/>
</dbReference>
<dbReference type="Pfam" id="PF01653">
    <property type="entry name" value="DNA_ligase_aden"/>
    <property type="match status" value="1"/>
</dbReference>
<dbReference type="Pfam" id="PF03120">
    <property type="entry name" value="DNA_ligase_OB"/>
    <property type="match status" value="1"/>
</dbReference>
<dbReference type="Pfam" id="PF03119">
    <property type="entry name" value="DNA_ligase_ZBD"/>
    <property type="match status" value="1"/>
</dbReference>
<dbReference type="Pfam" id="PF12826">
    <property type="entry name" value="HHH_2"/>
    <property type="match status" value="1"/>
</dbReference>
<dbReference type="Pfam" id="PF14520">
    <property type="entry name" value="HHH_5"/>
    <property type="match status" value="1"/>
</dbReference>
<dbReference type="Pfam" id="PF22745">
    <property type="entry name" value="Nlig-Ia"/>
    <property type="match status" value="1"/>
</dbReference>
<dbReference type="PIRSF" id="PIRSF001604">
    <property type="entry name" value="LigA"/>
    <property type="match status" value="1"/>
</dbReference>
<dbReference type="SMART" id="SM00292">
    <property type="entry name" value="BRCT"/>
    <property type="match status" value="1"/>
</dbReference>
<dbReference type="SMART" id="SM00278">
    <property type="entry name" value="HhH1"/>
    <property type="match status" value="3"/>
</dbReference>
<dbReference type="SMART" id="SM00532">
    <property type="entry name" value="LIGANc"/>
    <property type="match status" value="1"/>
</dbReference>
<dbReference type="SUPFAM" id="SSF52113">
    <property type="entry name" value="BRCT domain"/>
    <property type="match status" value="1"/>
</dbReference>
<dbReference type="SUPFAM" id="SSF56091">
    <property type="entry name" value="DNA ligase/mRNA capping enzyme, catalytic domain"/>
    <property type="match status" value="1"/>
</dbReference>
<dbReference type="SUPFAM" id="SSF50249">
    <property type="entry name" value="Nucleic acid-binding proteins"/>
    <property type="match status" value="1"/>
</dbReference>
<dbReference type="SUPFAM" id="SSF47781">
    <property type="entry name" value="RuvA domain 2-like"/>
    <property type="match status" value="1"/>
</dbReference>
<dbReference type="PROSITE" id="PS50172">
    <property type="entry name" value="BRCT"/>
    <property type="match status" value="1"/>
</dbReference>
<dbReference type="PROSITE" id="PS01055">
    <property type="entry name" value="DNA_LIGASE_N1"/>
    <property type="match status" value="1"/>
</dbReference>
<dbReference type="PROSITE" id="PS01056">
    <property type="entry name" value="DNA_LIGASE_N2"/>
    <property type="match status" value="1"/>
</dbReference>
<name>DNLJ_PARC0</name>
<gene>
    <name evidence="1" type="primary">ligA</name>
    <name type="ordered locus">Aave_2841</name>
</gene>
<accession>A1TR21</accession>
<proteinExistence type="inferred from homology"/>